<name>RS21_STRP2</name>
<protein>
    <recommendedName>
        <fullName evidence="1">Small ribosomal subunit protein bS21</fullName>
    </recommendedName>
    <alternativeName>
        <fullName evidence="3">30S ribosomal protein S21</fullName>
    </alternativeName>
</protein>
<accession>Q04JT6</accession>
<organism>
    <name type="scientific">Streptococcus pneumoniae serotype 2 (strain D39 / NCTC 7466)</name>
    <dbReference type="NCBI Taxonomy" id="373153"/>
    <lineage>
        <taxon>Bacteria</taxon>
        <taxon>Bacillati</taxon>
        <taxon>Bacillota</taxon>
        <taxon>Bacilli</taxon>
        <taxon>Lactobacillales</taxon>
        <taxon>Streptococcaceae</taxon>
        <taxon>Streptococcus</taxon>
    </lineage>
</organism>
<reference key="1">
    <citation type="journal article" date="2007" name="J. Bacteriol.">
        <title>Genome sequence of Avery's virulent serotype 2 strain D39 of Streptococcus pneumoniae and comparison with that of unencapsulated laboratory strain R6.</title>
        <authorList>
            <person name="Lanie J.A."/>
            <person name="Ng W.-L."/>
            <person name="Kazmierczak K.M."/>
            <person name="Andrzejewski T.M."/>
            <person name="Davidsen T.M."/>
            <person name="Wayne K.J."/>
            <person name="Tettelin H."/>
            <person name="Glass J.I."/>
            <person name="Winkler M.E."/>
        </authorList>
    </citation>
    <scope>NUCLEOTIDE SEQUENCE [LARGE SCALE GENOMIC DNA]</scope>
    <source>
        <strain>D39 / NCTC 7466</strain>
    </source>
</reference>
<comment type="similarity">
    <text evidence="1">Belongs to the bacterial ribosomal protein bS21 family.</text>
</comment>
<keyword id="KW-1185">Reference proteome</keyword>
<keyword id="KW-0687">Ribonucleoprotein</keyword>
<keyword id="KW-0689">Ribosomal protein</keyword>
<sequence>MSKTVVRKNESLDDALRRFKRAVTKAGTLQETRKREFYEKPSVKRKRKSEVARKRKKF</sequence>
<dbReference type="EMBL" id="CP000410">
    <property type="protein sequence ID" value="ABJ55391.1"/>
    <property type="molecule type" value="Genomic_DNA"/>
</dbReference>
<dbReference type="RefSeq" id="WP_000048055.1">
    <property type="nucleotide sequence ID" value="NZ_JAMLJR010000005.1"/>
</dbReference>
<dbReference type="SMR" id="Q04JT6"/>
<dbReference type="PaxDb" id="373153-SPD_1245"/>
<dbReference type="GeneID" id="45653328"/>
<dbReference type="KEGG" id="spd:SPD_1245"/>
<dbReference type="eggNOG" id="COG0828">
    <property type="taxonomic scope" value="Bacteria"/>
</dbReference>
<dbReference type="HOGENOM" id="CLU_159258_3_2_9"/>
<dbReference type="BioCyc" id="SPNE373153:G1G6V-1345-MONOMER"/>
<dbReference type="Proteomes" id="UP000001452">
    <property type="component" value="Chromosome"/>
</dbReference>
<dbReference type="GO" id="GO:1990904">
    <property type="term" value="C:ribonucleoprotein complex"/>
    <property type="evidence" value="ECO:0007669"/>
    <property type="project" value="UniProtKB-KW"/>
</dbReference>
<dbReference type="GO" id="GO:0005840">
    <property type="term" value="C:ribosome"/>
    <property type="evidence" value="ECO:0007669"/>
    <property type="project" value="UniProtKB-KW"/>
</dbReference>
<dbReference type="GO" id="GO:0003735">
    <property type="term" value="F:structural constituent of ribosome"/>
    <property type="evidence" value="ECO:0007669"/>
    <property type="project" value="InterPro"/>
</dbReference>
<dbReference type="GO" id="GO:0006412">
    <property type="term" value="P:translation"/>
    <property type="evidence" value="ECO:0007669"/>
    <property type="project" value="UniProtKB-UniRule"/>
</dbReference>
<dbReference type="Gene3D" id="1.20.5.1150">
    <property type="entry name" value="Ribosomal protein S8"/>
    <property type="match status" value="1"/>
</dbReference>
<dbReference type="HAMAP" id="MF_00358">
    <property type="entry name" value="Ribosomal_bS21"/>
    <property type="match status" value="1"/>
</dbReference>
<dbReference type="InterPro" id="IPR001911">
    <property type="entry name" value="Ribosomal_bS21"/>
</dbReference>
<dbReference type="InterPro" id="IPR018278">
    <property type="entry name" value="Ribosomal_bS21_CS"/>
</dbReference>
<dbReference type="InterPro" id="IPR038380">
    <property type="entry name" value="Ribosomal_bS21_sf"/>
</dbReference>
<dbReference type="NCBIfam" id="TIGR00030">
    <property type="entry name" value="S21p"/>
    <property type="match status" value="1"/>
</dbReference>
<dbReference type="PANTHER" id="PTHR21109">
    <property type="entry name" value="MITOCHONDRIAL 28S RIBOSOMAL PROTEIN S21"/>
    <property type="match status" value="1"/>
</dbReference>
<dbReference type="PANTHER" id="PTHR21109:SF22">
    <property type="entry name" value="SMALL RIBOSOMAL SUBUNIT PROTEIN BS21"/>
    <property type="match status" value="1"/>
</dbReference>
<dbReference type="Pfam" id="PF01165">
    <property type="entry name" value="Ribosomal_S21"/>
    <property type="match status" value="1"/>
</dbReference>
<dbReference type="PRINTS" id="PR00976">
    <property type="entry name" value="RIBOSOMALS21"/>
</dbReference>
<dbReference type="PROSITE" id="PS01181">
    <property type="entry name" value="RIBOSOMAL_S21"/>
    <property type="match status" value="1"/>
</dbReference>
<proteinExistence type="inferred from homology"/>
<feature type="chain" id="PRO_1000005177" description="Small ribosomal subunit protein bS21">
    <location>
        <begin position="1"/>
        <end position="58"/>
    </location>
</feature>
<feature type="region of interest" description="Disordered" evidence="2">
    <location>
        <begin position="39"/>
        <end position="58"/>
    </location>
</feature>
<feature type="compositionally biased region" description="Basic residues" evidence="2">
    <location>
        <begin position="43"/>
        <end position="58"/>
    </location>
</feature>
<gene>
    <name evidence="1" type="primary">rpsU</name>
    <name type="ordered locus">SPD_1245</name>
</gene>
<evidence type="ECO:0000255" key="1">
    <source>
        <dbReference type="HAMAP-Rule" id="MF_00358"/>
    </source>
</evidence>
<evidence type="ECO:0000256" key="2">
    <source>
        <dbReference type="SAM" id="MobiDB-lite"/>
    </source>
</evidence>
<evidence type="ECO:0000305" key="3"/>